<organism>
    <name type="scientific">Mungbean yellow mosaic virus (strain Vigna)</name>
    <name type="common">MYMV</name>
    <dbReference type="NCBI Taxonomy" id="223295"/>
    <lineage>
        <taxon>Viruses</taxon>
        <taxon>Monodnaviria</taxon>
        <taxon>Shotokuvirae</taxon>
        <taxon>Cressdnaviricota</taxon>
        <taxon>Repensiviricetes</taxon>
        <taxon>Geplafuvirales</taxon>
        <taxon>Geminiviridae</taxon>
        <taxon>Begomovirus</taxon>
        <taxon>Mungbean yellow mosaic virus</taxon>
    </lineage>
</organism>
<gene>
    <name type="ORF">AV2</name>
</gene>
<proteinExistence type="inferred from homology"/>
<evidence type="ECO:0000250" key="1"/>
<evidence type="ECO:0000305" key="2"/>
<keyword id="KW-1035">Host cytoplasm</keyword>
<keyword id="KW-0945">Host-virus interaction</keyword>
<keyword id="KW-1090">Inhibition of host innate immune response by virus</keyword>
<keyword id="KW-1185">Reference proteome</keyword>
<keyword id="KW-0941">Suppressor of RNA silencing</keyword>
<keyword id="KW-0899">Viral immunoevasion</keyword>
<protein>
    <recommendedName>
        <fullName>Protein AV2</fullName>
    </recommendedName>
</protein>
<accession>Q9YPS6</accession>
<comment type="function">
    <text evidence="1">Through its interaction with host SGS3, acts as a suppressor of RNA-mediated gene silencing, also known as post-transcriptional gene silencing (PTGS), a mechanism of plant viral defense that limits the accumulation of viral RNAs.</text>
</comment>
<comment type="subunit">
    <text evidence="1">Interacts with host SGS3.</text>
</comment>
<comment type="subcellular location">
    <subcellularLocation>
        <location evidence="1">Host cytoplasm</location>
        <location evidence="1">Host perinuclear region</location>
    </subcellularLocation>
    <text evidence="1">Accumulates in inclusion bodies in the cell periphery. May interact with the ER network from the perinuclear region out to the cell periphery (By similarity).</text>
</comment>
<comment type="similarity">
    <text evidence="2">Belongs to the geminiviridae protein AV2/V2 family.</text>
</comment>
<sequence length="116" mass="13594">MWDPLVNDFPKSLHGFRCMLAIKYLQYIQENYPSNSLGFVYLTELIQVLRIRKHAKAELRYRLLYPDVECAEEADLRHPAFLTCHCGKCPCQREKEEVDQPTHVEETEILSVIPLS</sequence>
<feature type="chain" id="PRO_0000323700" description="Protein AV2">
    <location>
        <begin position="1"/>
        <end position="116"/>
    </location>
</feature>
<dbReference type="EMBL" id="AJ132575">
    <property type="protein sequence ID" value="CAA10703.1"/>
    <property type="molecule type" value="Genomic_DNA"/>
</dbReference>
<dbReference type="Proteomes" id="UP000007784">
    <property type="component" value="Genome"/>
</dbReference>
<dbReference type="GO" id="GO:0044220">
    <property type="term" value="C:host cell perinuclear region of cytoplasm"/>
    <property type="evidence" value="ECO:0007669"/>
    <property type="project" value="UniProtKB-SubCell"/>
</dbReference>
<dbReference type="GO" id="GO:0060967">
    <property type="term" value="P:negative regulation of gene silencing by regulatory ncRNA"/>
    <property type="evidence" value="ECO:0007669"/>
    <property type="project" value="InterPro"/>
</dbReference>
<dbReference type="GO" id="GO:0052170">
    <property type="term" value="P:symbiont-mediated suppression of host innate immune response"/>
    <property type="evidence" value="ECO:0007669"/>
    <property type="project" value="UniProtKB-KW"/>
</dbReference>
<dbReference type="InterPro" id="IPR002511">
    <property type="entry name" value="Gemini_V2"/>
</dbReference>
<dbReference type="Pfam" id="PF01524">
    <property type="entry name" value="Gemini_V2"/>
    <property type="match status" value="1"/>
</dbReference>
<organismHost>
    <name type="scientific">Glycine max</name>
    <name type="common">Soybean</name>
    <name type="synonym">Glycine hispida</name>
    <dbReference type="NCBI Taxonomy" id="3847"/>
</organismHost>
<organismHost>
    <name type="scientific">Vigna mungo</name>
    <name type="common">Black gram</name>
    <name type="synonym">Phaseolus mungo</name>
    <dbReference type="NCBI Taxonomy" id="3915"/>
</organismHost>
<organismHost>
    <name type="scientific">Vigna radiata</name>
    <name type="common">Mung bean</name>
    <dbReference type="NCBI Taxonomy" id="157791"/>
</organismHost>
<organismHost>
    <name type="scientific">Vigna radiata var. radiata</name>
    <name type="common">Mung bean</name>
    <name type="synonym">Phaseolus aureus</name>
    <dbReference type="NCBI Taxonomy" id="3916"/>
</organismHost>
<organismHost>
    <name type="scientific">Vigna unguiculata</name>
    <name type="common">Cowpea</name>
    <dbReference type="NCBI Taxonomy" id="3917"/>
</organismHost>
<name>AV2_MYMVV</name>
<reference key="1">
    <citation type="journal article" date="2004" name="Arch. Virol.">
        <title>Analysis of an isolate of Mungbean yellow mosaic virus (MYMV) with a highly variable DNA B component.</title>
        <authorList>
            <person name="Karthikeyan A.S."/>
            <person name="Vanitharani R."/>
            <person name="Balaji V."/>
            <person name="Anuradha S."/>
            <person name="Thillaichidambaram P."/>
            <person name="Shivaprasad P.V."/>
            <person name="Parameswari C."/>
            <person name="Balamani V."/>
            <person name="Saminathan M."/>
            <person name="Veluthambi K."/>
        </authorList>
    </citation>
    <scope>NUCLEOTIDE SEQUENCE [GENOMIC DNA]</scope>
</reference>